<name>Y2764_BACAA</name>
<accession>C3PC50</accession>
<gene>
    <name type="ordered locus">BAA_2764</name>
</gene>
<evidence type="ECO:0000255" key="1">
    <source>
        <dbReference type="HAMAP-Rule" id="MF_01256"/>
    </source>
</evidence>
<dbReference type="EC" id="3.-.-.-" evidence="1"/>
<dbReference type="EMBL" id="CP001598">
    <property type="protein sequence ID" value="ACQ50455.1"/>
    <property type="molecule type" value="Genomic_DNA"/>
</dbReference>
<dbReference type="RefSeq" id="WP_000999075.1">
    <property type="nucleotide sequence ID" value="NC_012659.1"/>
</dbReference>
<dbReference type="SMR" id="C3PC50"/>
<dbReference type="GeneID" id="45022546"/>
<dbReference type="KEGG" id="bai:BAA_2764"/>
<dbReference type="HOGENOM" id="CLU_105789_1_0_9"/>
<dbReference type="GO" id="GO:0005737">
    <property type="term" value="C:cytoplasm"/>
    <property type="evidence" value="ECO:0007669"/>
    <property type="project" value="UniProtKB-SubCell"/>
</dbReference>
<dbReference type="GO" id="GO:0016787">
    <property type="term" value="F:hydrolase activity"/>
    <property type="evidence" value="ECO:0007669"/>
    <property type="project" value="UniProtKB-UniRule"/>
</dbReference>
<dbReference type="GO" id="GO:0008270">
    <property type="term" value="F:zinc ion binding"/>
    <property type="evidence" value="ECO:0007669"/>
    <property type="project" value="UniProtKB-UniRule"/>
</dbReference>
<dbReference type="Gene3D" id="1.20.120.450">
    <property type="entry name" value="dinb family like domain"/>
    <property type="match status" value="1"/>
</dbReference>
<dbReference type="HAMAP" id="MF_01256">
    <property type="entry name" value="YfiT_hydrol"/>
    <property type="match status" value="1"/>
</dbReference>
<dbReference type="InterPro" id="IPR024775">
    <property type="entry name" value="DinB-like"/>
</dbReference>
<dbReference type="InterPro" id="IPR034660">
    <property type="entry name" value="DinB/YfiT-like"/>
</dbReference>
<dbReference type="InterPro" id="IPR023774">
    <property type="entry name" value="Put_metal_dep_hydrolase_YfiT"/>
</dbReference>
<dbReference type="NCBIfam" id="NF009807">
    <property type="entry name" value="PRK13291.1"/>
    <property type="match status" value="1"/>
</dbReference>
<dbReference type="Pfam" id="PF12867">
    <property type="entry name" value="DinB_2"/>
    <property type="match status" value="1"/>
</dbReference>
<dbReference type="SUPFAM" id="SSF109854">
    <property type="entry name" value="DinB/YfiT-like putative metalloenzymes"/>
    <property type="match status" value="1"/>
</dbReference>
<reference key="1">
    <citation type="submission" date="2009-04" db="EMBL/GenBank/DDBJ databases">
        <title>Genome sequence of Bacillus anthracis A0248.</title>
        <authorList>
            <person name="Dodson R.J."/>
            <person name="Munk A.C."/>
            <person name="Bruce D."/>
            <person name="Detter C."/>
            <person name="Tapia R."/>
            <person name="Sutton G."/>
            <person name="Sims D."/>
            <person name="Brettin T."/>
        </authorList>
    </citation>
    <scope>NUCLEOTIDE SEQUENCE [LARGE SCALE GENOMIC DNA]</scope>
    <source>
        <strain>A0248</strain>
    </source>
</reference>
<comment type="function">
    <text evidence="1">Possible metal-dependent hydrolase.</text>
</comment>
<comment type="cofactor">
    <cofactor evidence="1">
        <name>Zn(2+)</name>
        <dbReference type="ChEBI" id="CHEBI:29105"/>
    </cofactor>
    <text evidence="1">Binds 1 zinc ion per subunit.</text>
</comment>
<comment type="subunit">
    <text evidence="1">Homodimer.</text>
</comment>
<comment type="subcellular location">
    <subcellularLocation>
        <location evidence="1">Cytoplasm</location>
    </subcellularLocation>
</comment>
<comment type="similarity">
    <text evidence="1">Belongs to the metal hydrolase YfiT family.</text>
</comment>
<proteinExistence type="inferred from homology"/>
<protein>
    <recommendedName>
        <fullName evidence="1">Putative metal-dependent hydrolase BAA_2764</fullName>
        <ecNumber evidence="1">3.-.-.-</ecNumber>
    </recommendedName>
</protein>
<organism>
    <name type="scientific">Bacillus anthracis (strain A0248)</name>
    <dbReference type="NCBI Taxonomy" id="592021"/>
    <lineage>
        <taxon>Bacteria</taxon>
        <taxon>Bacillati</taxon>
        <taxon>Bacillota</taxon>
        <taxon>Bacilli</taxon>
        <taxon>Bacillales</taxon>
        <taxon>Bacillaceae</taxon>
        <taxon>Bacillus</taxon>
        <taxon>Bacillus cereus group</taxon>
    </lineage>
</organism>
<sequence length="173" mass="20399">MNDLRYPIGQFTYKRPITEEMIDTWIQEIEDLPNELTKAIKDLDQKQLDTPYRVGGWTVRQVVHHVVDSHMNSYIRFKLALTEKNPTIKPYKEEKWAELPDSKLPVDVSLVMLESLHKRWVNLLYSLELEDLEKTFNHPDTGETKLAAAIGLYAWHGRHHTAHITSLRKRLNW</sequence>
<feature type="chain" id="PRO_1000165105" description="Putative metal-dependent hydrolase BAA_2764">
    <location>
        <begin position="1"/>
        <end position="173"/>
    </location>
</feature>
<feature type="binding site" evidence="1">
    <location>
        <position position="65"/>
    </location>
    <ligand>
        <name>Zn(2+)</name>
        <dbReference type="ChEBI" id="CHEBI:29105"/>
    </ligand>
</feature>
<feature type="binding site" evidence="1">
    <location>
        <position position="156"/>
    </location>
    <ligand>
        <name>Zn(2+)</name>
        <dbReference type="ChEBI" id="CHEBI:29105"/>
    </ligand>
</feature>
<feature type="binding site" evidence="1">
    <location>
        <position position="160"/>
    </location>
    <ligand>
        <name>Zn(2+)</name>
        <dbReference type="ChEBI" id="CHEBI:29105"/>
    </ligand>
</feature>
<keyword id="KW-0963">Cytoplasm</keyword>
<keyword id="KW-0378">Hydrolase</keyword>
<keyword id="KW-0479">Metal-binding</keyword>
<keyword id="KW-0862">Zinc</keyword>